<feature type="chain" id="PRO_1000070104" description="Membrane protein insertase YidC">
    <location>
        <begin position="1"/>
        <end position="541"/>
    </location>
</feature>
<feature type="transmembrane region" description="Helical" evidence="1">
    <location>
        <begin position="6"/>
        <end position="26"/>
    </location>
</feature>
<feature type="transmembrane region" description="Helical" evidence="1">
    <location>
        <begin position="337"/>
        <end position="357"/>
    </location>
</feature>
<feature type="transmembrane region" description="Helical" evidence="1">
    <location>
        <begin position="416"/>
        <end position="436"/>
    </location>
</feature>
<feature type="transmembrane region" description="Helical" evidence="1">
    <location>
        <begin position="454"/>
        <end position="474"/>
    </location>
</feature>
<feature type="transmembrane region" description="Helical" evidence="1">
    <location>
        <begin position="495"/>
        <end position="515"/>
    </location>
</feature>
<feature type="region of interest" description="Disordered" evidence="2">
    <location>
        <begin position="34"/>
        <end position="56"/>
    </location>
</feature>
<accession>A5UD72</accession>
<name>YIDC_HAEIE</name>
<gene>
    <name evidence="1" type="primary">yidC</name>
    <name type="ordered locus">CGSHiEE_06970</name>
</gene>
<dbReference type="EMBL" id="CP000671">
    <property type="protein sequence ID" value="ABQ98723.1"/>
    <property type="molecule type" value="Genomic_DNA"/>
</dbReference>
<dbReference type="SMR" id="A5UD72"/>
<dbReference type="KEGG" id="hip:CGSHiEE_06970"/>
<dbReference type="HOGENOM" id="CLU_016535_3_0_6"/>
<dbReference type="GO" id="GO:0005886">
    <property type="term" value="C:plasma membrane"/>
    <property type="evidence" value="ECO:0007669"/>
    <property type="project" value="UniProtKB-SubCell"/>
</dbReference>
<dbReference type="GO" id="GO:0032977">
    <property type="term" value="F:membrane insertase activity"/>
    <property type="evidence" value="ECO:0007669"/>
    <property type="project" value="InterPro"/>
</dbReference>
<dbReference type="GO" id="GO:0051205">
    <property type="term" value="P:protein insertion into membrane"/>
    <property type="evidence" value="ECO:0007669"/>
    <property type="project" value="TreeGrafter"/>
</dbReference>
<dbReference type="GO" id="GO:0015031">
    <property type="term" value="P:protein transport"/>
    <property type="evidence" value="ECO:0007669"/>
    <property type="project" value="UniProtKB-KW"/>
</dbReference>
<dbReference type="CDD" id="cd20070">
    <property type="entry name" value="5TM_YidC_Alb3"/>
    <property type="match status" value="1"/>
</dbReference>
<dbReference type="CDD" id="cd19961">
    <property type="entry name" value="EcYidC-like_peri"/>
    <property type="match status" value="1"/>
</dbReference>
<dbReference type="FunFam" id="2.70.98.90:FF:000001">
    <property type="entry name" value="Membrane protein insertase YidC"/>
    <property type="match status" value="1"/>
</dbReference>
<dbReference type="Gene3D" id="2.70.98.90">
    <property type="match status" value="1"/>
</dbReference>
<dbReference type="HAMAP" id="MF_01810">
    <property type="entry name" value="YidC_type1"/>
    <property type="match status" value="1"/>
</dbReference>
<dbReference type="InterPro" id="IPR019998">
    <property type="entry name" value="Membr_insert_YidC"/>
</dbReference>
<dbReference type="InterPro" id="IPR028053">
    <property type="entry name" value="Membr_insert_YidC_N"/>
</dbReference>
<dbReference type="InterPro" id="IPR001708">
    <property type="entry name" value="YidC/ALB3/OXA1/COX18"/>
</dbReference>
<dbReference type="InterPro" id="IPR028055">
    <property type="entry name" value="YidC/Oxa/ALB_C"/>
</dbReference>
<dbReference type="InterPro" id="IPR047196">
    <property type="entry name" value="YidC_ALB_C"/>
</dbReference>
<dbReference type="InterPro" id="IPR038221">
    <property type="entry name" value="YidC_periplasmic_sf"/>
</dbReference>
<dbReference type="NCBIfam" id="NF002351">
    <property type="entry name" value="PRK01318.1-1"/>
    <property type="match status" value="1"/>
</dbReference>
<dbReference type="NCBIfam" id="NF002352">
    <property type="entry name" value="PRK01318.1-3"/>
    <property type="match status" value="1"/>
</dbReference>
<dbReference type="NCBIfam" id="NF002353">
    <property type="entry name" value="PRK01318.1-4"/>
    <property type="match status" value="1"/>
</dbReference>
<dbReference type="NCBIfam" id="TIGR03593">
    <property type="entry name" value="yidC_nterm"/>
    <property type="match status" value="1"/>
</dbReference>
<dbReference type="NCBIfam" id="TIGR03592">
    <property type="entry name" value="yidC_oxa1_cterm"/>
    <property type="match status" value="1"/>
</dbReference>
<dbReference type="PANTHER" id="PTHR12428:SF65">
    <property type="entry name" value="CYTOCHROME C OXIDASE ASSEMBLY PROTEIN COX18, MITOCHONDRIAL"/>
    <property type="match status" value="1"/>
</dbReference>
<dbReference type="PANTHER" id="PTHR12428">
    <property type="entry name" value="OXA1"/>
    <property type="match status" value="1"/>
</dbReference>
<dbReference type="Pfam" id="PF02096">
    <property type="entry name" value="60KD_IMP"/>
    <property type="match status" value="1"/>
</dbReference>
<dbReference type="Pfam" id="PF14849">
    <property type="entry name" value="YidC_periplas"/>
    <property type="match status" value="1"/>
</dbReference>
<dbReference type="PRINTS" id="PR00701">
    <property type="entry name" value="60KDINNERMP"/>
</dbReference>
<dbReference type="PRINTS" id="PR01900">
    <property type="entry name" value="YIDCPROTEIN"/>
</dbReference>
<sequence>MDSRRSLLVLALIFISFLVYQQWQLDKNPPVQTEQTTSITATSDVPASSPSNSQAIADSQTRGRIITLENDVFRLKIDTLGGDVISSELLKYDAELDSKTPFELLKDTKEHIYIAQSGLIGKNGIDTRSGRAQYQIEGDNFKLAEGQESLSVPLLFEKDGVTYQKIFVLKRGSYDLGVDYKIDNQSGQAIEVEPYGQLKHSIVESSGNVAMPTYTGGAYSSSETNYKKYSFADMQDNNLSIDTKAGWVAVLQHYFVSAWIPNQDVNNQLYTITDSKNNVASIGYRGPVVTIPAGSQETITSSLWTGPKLQNQMATVANNLDLTVDYGWAWFIAKPLFWLLTFIQGIVSNWGLAIICVTIVVKAILYPLTKAQYTSMAKMRILQPKMQEMRERFGDDRQRMSQEMMKLYKEEKVNPLGGCLPILLQMPIFIALYWTFLEAVELRHAPFFGWIQDLSAQDPYYILPILMGISMFLLQKMSPTPVTDPTQQKVMNFMPLIFMVFFLWFPSGLVLYWLVSNLITIAQQQLIYRGLEKKGLHSRKK</sequence>
<proteinExistence type="inferred from homology"/>
<evidence type="ECO:0000255" key="1">
    <source>
        <dbReference type="HAMAP-Rule" id="MF_01810"/>
    </source>
</evidence>
<evidence type="ECO:0000256" key="2">
    <source>
        <dbReference type="SAM" id="MobiDB-lite"/>
    </source>
</evidence>
<protein>
    <recommendedName>
        <fullName evidence="1">Membrane protein insertase YidC</fullName>
    </recommendedName>
    <alternativeName>
        <fullName evidence="1">Foldase YidC</fullName>
    </alternativeName>
    <alternativeName>
        <fullName evidence="1">Membrane integrase YidC</fullName>
    </alternativeName>
    <alternativeName>
        <fullName evidence="1">Membrane protein YidC</fullName>
    </alternativeName>
</protein>
<organism>
    <name type="scientific">Haemophilus influenzae (strain PittEE)</name>
    <dbReference type="NCBI Taxonomy" id="374930"/>
    <lineage>
        <taxon>Bacteria</taxon>
        <taxon>Pseudomonadati</taxon>
        <taxon>Pseudomonadota</taxon>
        <taxon>Gammaproteobacteria</taxon>
        <taxon>Pasteurellales</taxon>
        <taxon>Pasteurellaceae</taxon>
        <taxon>Haemophilus</taxon>
    </lineage>
</organism>
<comment type="function">
    <text evidence="1">Required for the insertion and/or proper folding and/or complex formation of integral membrane proteins into the membrane. Involved in integration of membrane proteins that insert both dependently and independently of the Sec translocase complex, as well as at least some lipoproteins. Aids folding of multispanning membrane proteins.</text>
</comment>
<comment type="subunit">
    <text evidence="1">Interacts with the Sec translocase complex via SecD. Specifically interacts with transmembrane segments of nascent integral membrane proteins during membrane integration.</text>
</comment>
<comment type="subcellular location">
    <subcellularLocation>
        <location evidence="1">Cell inner membrane</location>
        <topology evidence="1">Multi-pass membrane protein</topology>
    </subcellularLocation>
</comment>
<comment type="similarity">
    <text evidence="1">Belongs to the OXA1/ALB3/YidC family. Type 1 subfamily.</text>
</comment>
<keyword id="KW-0997">Cell inner membrane</keyword>
<keyword id="KW-1003">Cell membrane</keyword>
<keyword id="KW-0143">Chaperone</keyword>
<keyword id="KW-0472">Membrane</keyword>
<keyword id="KW-0653">Protein transport</keyword>
<keyword id="KW-0812">Transmembrane</keyword>
<keyword id="KW-1133">Transmembrane helix</keyword>
<keyword id="KW-0813">Transport</keyword>
<reference key="1">
    <citation type="journal article" date="2007" name="Genome Biol.">
        <title>Characterization and modeling of the Haemophilus influenzae core and supragenomes based on the complete genomic sequences of Rd and 12 clinical nontypeable strains.</title>
        <authorList>
            <person name="Hogg J.S."/>
            <person name="Hu F.Z."/>
            <person name="Janto B."/>
            <person name="Boissy R."/>
            <person name="Hayes J."/>
            <person name="Keefe R."/>
            <person name="Post J.C."/>
            <person name="Ehrlich G.D."/>
        </authorList>
    </citation>
    <scope>NUCLEOTIDE SEQUENCE [LARGE SCALE GENOMIC DNA]</scope>
    <source>
        <strain>PittEE</strain>
    </source>
</reference>